<dbReference type="EC" id="3.1.26.4" evidence="1"/>
<dbReference type="EMBL" id="AE017333">
    <property type="protein sequence ID" value="AAU41876.1"/>
    <property type="molecule type" value="Genomic_DNA"/>
</dbReference>
<dbReference type="EMBL" id="CP000002">
    <property type="protein sequence ID" value="AAU24516.1"/>
    <property type="molecule type" value="Genomic_DNA"/>
</dbReference>
<dbReference type="RefSeq" id="WP_003184208.1">
    <property type="nucleotide sequence ID" value="NC_006322.1"/>
</dbReference>
<dbReference type="SMR" id="Q65GD8"/>
<dbReference type="STRING" id="279010.BL00302"/>
<dbReference type="GeneID" id="92860399"/>
<dbReference type="KEGG" id="bld:BLi03009"/>
<dbReference type="KEGG" id="bli:BL00302"/>
<dbReference type="eggNOG" id="COG1039">
    <property type="taxonomic scope" value="Bacteria"/>
</dbReference>
<dbReference type="HOGENOM" id="CLU_059546_1_0_9"/>
<dbReference type="Proteomes" id="UP000000606">
    <property type="component" value="Chromosome"/>
</dbReference>
<dbReference type="GO" id="GO:0005737">
    <property type="term" value="C:cytoplasm"/>
    <property type="evidence" value="ECO:0007669"/>
    <property type="project" value="UniProtKB-SubCell"/>
</dbReference>
<dbReference type="GO" id="GO:0032299">
    <property type="term" value="C:ribonuclease H2 complex"/>
    <property type="evidence" value="ECO:0007669"/>
    <property type="project" value="TreeGrafter"/>
</dbReference>
<dbReference type="GO" id="GO:0000287">
    <property type="term" value="F:magnesium ion binding"/>
    <property type="evidence" value="ECO:0007669"/>
    <property type="project" value="UniProtKB-UniRule"/>
</dbReference>
<dbReference type="GO" id="GO:0003723">
    <property type="term" value="F:RNA binding"/>
    <property type="evidence" value="ECO:0007669"/>
    <property type="project" value="InterPro"/>
</dbReference>
<dbReference type="GO" id="GO:0004523">
    <property type="term" value="F:RNA-DNA hybrid ribonuclease activity"/>
    <property type="evidence" value="ECO:0007669"/>
    <property type="project" value="UniProtKB-UniRule"/>
</dbReference>
<dbReference type="GO" id="GO:0043137">
    <property type="term" value="P:DNA replication, removal of RNA primer"/>
    <property type="evidence" value="ECO:0007669"/>
    <property type="project" value="TreeGrafter"/>
</dbReference>
<dbReference type="GO" id="GO:0006298">
    <property type="term" value="P:mismatch repair"/>
    <property type="evidence" value="ECO:0007669"/>
    <property type="project" value="TreeGrafter"/>
</dbReference>
<dbReference type="CDD" id="cd06590">
    <property type="entry name" value="RNase_HII_bacteria_HIII_like"/>
    <property type="match status" value="1"/>
</dbReference>
<dbReference type="CDD" id="cd14796">
    <property type="entry name" value="RNAse_HIII_N"/>
    <property type="match status" value="1"/>
</dbReference>
<dbReference type="FunFam" id="3.30.420.10:FF:000047">
    <property type="entry name" value="Ribonuclease HIII"/>
    <property type="match status" value="1"/>
</dbReference>
<dbReference type="Gene3D" id="3.30.420.10">
    <property type="entry name" value="Ribonuclease H-like superfamily/Ribonuclease H"/>
    <property type="match status" value="1"/>
</dbReference>
<dbReference type="Gene3D" id="3.30.310.10">
    <property type="entry name" value="TATA-Binding Protein"/>
    <property type="match status" value="1"/>
</dbReference>
<dbReference type="HAMAP" id="MF_00053">
    <property type="entry name" value="RNase_HIII"/>
    <property type="match status" value="1"/>
</dbReference>
<dbReference type="InterPro" id="IPR001352">
    <property type="entry name" value="RNase_HII/HIII"/>
</dbReference>
<dbReference type="InterPro" id="IPR024567">
    <property type="entry name" value="RNase_HII/HIII_dom"/>
</dbReference>
<dbReference type="InterPro" id="IPR004641">
    <property type="entry name" value="RNase_HIII"/>
</dbReference>
<dbReference type="InterPro" id="IPR024568">
    <property type="entry name" value="RNase_HIII_N"/>
</dbReference>
<dbReference type="InterPro" id="IPR012337">
    <property type="entry name" value="RNaseH-like_sf"/>
</dbReference>
<dbReference type="InterPro" id="IPR036397">
    <property type="entry name" value="RNaseH_sf"/>
</dbReference>
<dbReference type="InterPro" id="IPR012295">
    <property type="entry name" value="TBP_dom_sf"/>
</dbReference>
<dbReference type="NCBIfam" id="TIGR00716">
    <property type="entry name" value="rnhC"/>
    <property type="match status" value="1"/>
</dbReference>
<dbReference type="PANTHER" id="PTHR10954:SF23">
    <property type="entry name" value="RIBONUCLEASE"/>
    <property type="match status" value="1"/>
</dbReference>
<dbReference type="PANTHER" id="PTHR10954">
    <property type="entry name" value="RIBONUCLEASE H2 SUBUNIT A"/>
    <property type="match status" value="1"/>
</dbReference>
<dbReference type="Pfam" id="PF11858">
    <property type="entry name" value="DUF3378"/>
    <property type="match status" value="1"/>
</dbReference>
<dbReference type="Pfam" id="PF01351">
    <property type="entry name" value="RNase_HII"/>
    <property type="match status" value="1"/>
</dbReference>
<dbReference type="PIRSF" id="PIRSF037748">
    <property type="entry name" value="RnhC"/>
    <property type="match status" value="1"/>
</dbReference>
<dbReference type="SUPFAM" id="SSF53098">
    <property type="entry name" value="Ribonuclease H-like"/>
    <property type="match status" value="1"/>
</dbReference>
<dbReference type="PROSITE" id="PS51975">
    <property type="entry name" value="RNASE_H_2"/>
    <property type="match status" value="1"/>
</dbReference>
<organism>
    <name type="scientific">Bacillus licheniformis (strain ATCC 14580 / DSM 13 / JCM 2505 / CCUG 7422 / NBRC 12200 / NCIMB 9375 / NCTC 10341 / NRRL NRS-1264 / Gibson 46)</name>
    <dbReference type="NCBI Taxonomy" id="279010"/>
    <lineage>
        <taxon>Bacteria</taxon>
        <taxon>Bacillati</taxon>
        <taxon>Bacillota</taxon>
        <taxon>Bacilli</taxon>
        <taxon>Bacillales</taxon>
        <taxon>Bacillaceae</taxon>
        <taxon>Bacillus</taxon>
    </lineage>
</organism>
<evidence type="ECO:0000255" key="1">
    <source>
        <dbReference type="HAMAP-Rule" id="MF_00053"/>
    </source>
</evidence>
<evidence type="ECO:0000255" key="2">
    <source>
        <dbReference type="PROSITE-ProRule" id="PRU01319"/>
    </source>
</evidence>
<evidence type="ECO:0000256" key="3">
    <source>
        <dbReference type="SAM" id="MobiDB-lite"/>
    </source>
</evidence>
<reference key="1">
    <citation type="journal article" date="2004" name="J. Mol. Microbiol. Biotechnol.">
        <title>The complete genome sequence of Bacillus licheniformis DSM13, an organism with great industrial potential.</title>
        <authorList>
            <person name="Veith B."/>
            <person name="Herzberg C."/>
            <person name="Steckel S."/>
            <person name="Feesche J."/>
            <person name="Maurer K.H."/>
            <person name="Ehrenreich P."/>
            <person name="Baeumer S."/>
            <person name="Henne A."/>
            <person name="Liesegang H."/>
            <person name="Merkl R."/>
            <person name="Ehrenreich A."/>
            <person name="Gottschalk G."/>
        </authorList>
    </citation>
    <scope>NUCLEOTIDE SEQUENCE [LARGE SCALE GENOMIC DNA]</scope>
    <source>
        <strain>ATCC 14580 / DSM 13 / JCM 2505 / CCUG 7422 / NBRC 12200 / NCIMB 9375 / NCTC 10341 / NRRL NRS-1264 / Gibson 46</strain>
    </source>
</reference>
<reference key="2">
    <citation type="journal article" date="2004" name="Genome Biol.">
        <title>Complete genome sequence of the industrial bacterium Bacillus licheniformis and comparisons with closely related Bacillus species.</title>
        <authorList>
            <person name="Rey M.W."/>
            <person name="Ramaiya P."/>
            <person name="Nelson B.A."/>
            <person name="Brody-Karpin S.D."/>
            <person name="Zaretsky E.J."/>
            <person name="Tang M."/>
            <person name="Lopez de Leon A."/>
            <person name="Xiang H."/>
            <person name="Gusti V."/>
            <person name="Clausen I.G."/>
            <person name="Olsen P.B."/>
            <person name="Rasmussen M.D."/>
            <person name="Andersen J.T."/>
            <person name="Joergensen P.L."/>
            <person name="Larsen T.S."/>
            <person name="Sorokin A."/>
            <person name="Bolotin A."/>
            <person name="Lapidus A."/>
            <person name="Galleron N."/>
            <person name="Ehrlich S.D."/>
            <person name="Berka R.M."/>
        </authorList>
    </citation>
    <scope>NUCLEOTIDE SEQUENCE [LARGE SCALE GENOMIC DNA]</scope>
    <source>
        <strain>ATCC 14580 / DSM 13 / JCM 2505 / CCUG 7422 / NBRC 12200 / NCIMB 9375 / NCTC 10341 / NRRL NRS-1264 / Gibson 46</strain>
    </source>
</reference>
<proteinExistence type="inferred from homology"/>
<accession>Q65GD8</accession>
<accession>Q62RU4</accession>
<sequence>MSHSVLKVPPSVIERMQSHYGPDITSLSVQGAVFQAKPQGCTITAYRSGKVLFQGKNAEKEAERWTADAETPAPKKPASKKSIPSVYQPPEGIGSMSVIGSDEVGTGDYFGPITVACVYADKAKLPLLKELGVKDSKNLKDPQIVQIARDLIKTVPYSLLVLRNEKYNEMQEKGMSQGKMKALLHNQAIGNLLKKLDGTRPEAILIDQFAEPAVYFKHLAGKTAVKERTYFSTKAEGIHLSVAAASIIARYSFLMEMDKLSKQAGITLPKGAGPLVDEAGAKLIKKHGEDALRVFTKLHFANTQKAKRIASKR</sequence>
<comment type="function">
    <text evidence="1">Endonuclease that specifically degrades the RNA of RNA-DNA hybrids.</text>
</comment>
<comment type="catalytic activity">
    <reaction evidence="1">
        <text>Endonucleolytic cleavage to 5'-phosphomonoester.</text>
        <dbReference type="EC" id="3.1.26.4"/>
    </reaction>
</comment>
<comment type="cofactor">
    <cofactor evidence="1">
        <name>Mn(2+)</name>
        <dbReference type="ChEBI" id="CHEBI:29035"/>
    </cofactor>
    <cofactor evidence="1">
        <name>Mg(2+)</name>
        <dbReference type="ChEBI" id="CHEBI:18420"/>
    </cofactor>
    <text evidence="1">Manganese or magnesium. Binds 1 divalent metal ion per monomer in the absence of substrate. May bind a second metal ion after substrate binding.</text>
</comment>
<comment type="subcellular location">
    <subcellularLocation>
        <location evidence="1">Cytoplasm</location>
    </subcellularLocation>
</comment>
<comment type="similarity">
    <text evidence="1">Belongs to the RNase HII family. RnhC subfamily.</text>
</comment>
<name>RNH3_BACLD</name>
<keyword id="KW-0963">Cytoplasm</keyword>
<keyword id="KW-0255">Endonuclease</keyword>
<keyword id="KW-0378">Hydrolase</keyword>
<keyword id="KW-0460">Magnesium</keyword>
<keyword id="KW-0479">Metal-binding</keyword>
<keyword id="KW-0540">Nuclease</keyword>
<keyword id="KW-1185">Reference proteome</keyword>
<feature type="chain" id="PRO_0000111679" description="Ribonuclease HIII">
    <location>
        <begin position="1"/>
        <end position="313"/>
    </location>
</feature>
<feature type="domain" description="RNase H type-2" evidence="2">
    <location>
        <begin position="96"/>
        <end position="312"/>
    </location>
</feature>
<feature type="region of interest" description="Disordered" evidence="3">
    <location>
        <begin position="62"/>
        <end position="88"/>
    </location>
</feature>
<feature type="binding site" evidence="1">
    <location>
        <position position="102"/>
    </location>
    <ligand>
        <name>a divalent metal cation</name>
        <dbReference type="ChEBI" id="CHEBI:60240"/>
    </ligand>
</feature>
<feature type="binding site" evidence="1">
    <location>
        <position position="103"/>
    </location>
    <ligand>
        <name>a divalent metal cation</name>
        <dbReference type="ChEBI" id="CHEBI:60240"/>
    </ligand>
</feature>
<feature type="binding site" evidence="1">
    <location>
        <position position="207"/>
    </location>
    <ligand>
        <name>a divalent metal cation</name>
        <dbReference type="ChEBI" id="CHEBI:60240"/>
    </ligand>
</feature>
<protein>
    <recommendedName>
        <fullName evidence="1">Ribonuclease HIII</fullName>
        <shortName evidence="1">RNase HIII</shortName>
        <ecNumber evidence="1">3.1.26.4</ecNumber>
    </recommendedName>
</protein>
<gene>
    <name evidence="1" type="primary">rnhC</name>
    <name type="ordered locus">BLi03009</name>
    <name type="ordered locus">BL00302</name>
</gene>